<feature type="chain" id="PRO_0000106181" description="Nucleotide-binding protein YajQ">
    <location>
        <begin position="1"/>
        <end position="163"/>
    </location>
</feature>
<name>YAJQ_ECOL6</name>
<protein>
    <recommendedName>
        <fullName evidence="1">Nucleotide-binding protein YajQ</fullName>
    </recommendedName>
</protein>
<dbReference type="EMBL" id="AE014075">
    <property type="protein sequence ID" value="AAN79015.1"/>
    <property type="status" value="ALT_INIT"/>
    <property type="molecule type" value="Genomic_DNA"/>
</dbReference>
<dbReference type="RefSeq" id="WP_001138904.1">
    <property type="nucleotide sequence ID" value="NZ_CP051263.1"/>
</dbReference>
<dbReference type="SMR" id="P0A8E8"/>
<dbReference type="STRING" id="199310.c0537"/>
<dbReference type="GeneID" id="93777034"/>
<dbReference type="KEGG" id="ecc:c0537"/>
<dbReference type="eggNOG" id="COG1666">
    <property type="taxonomic scope" value="Bacteria"/>
</dbReference>
<dbReference type="HOGENOM" id="CLU_099839_1_0_6"/>
<dbReference type="Proteomes" id="UP000001410">
    <property type="component" value="Chromosome"/>
</dbReference>
<dbReference type="GO" id="GO:0005829">
    <property type="term" value="C:cytosol"/>
    <property type="evidence" value="ECO:0007669"/>
    <property type="project" value="TreeGrafter"/>
</dbReference>
<dbReference type="GO" id="GO:0000166">
    <property type="term" value="F:nucleotide binding"/>
    <property type="evidence" value="ECO:0007669"/>
    <property type="project" value="TreeGrafter"/>
</dbReference>
<dbReference type="CDD" id="cd11740">
    <property type="entry name" value="YajQ_like"/>
    <property type="match status" value="1"/>
</dbReference>
<dbReference type="FunFam" id="3.30.70.860:FF:000001">
    <property type="entry name" value="UPF0234 protein YajQ"/>
    <property type="match status" value="1"/>
</dbReference>
<dbReference type="FunFam" id="3.30.70.990:FF:000001">
    <property type="entry name" value="UPF0234 protein YajQ"/>
    <property type="match status" value="1"/>
</dbReference>
<dbReference type="Gene3D" id="3.30.70.860">
    <property type="match status" value="1"/>
</dbReference>
<dbReference type="Gene3D" id="3.30.70.990">
    <property type="entry name" value="YajQ-like, domain 2"/>
    <property type="match status" value="1"/>
</dbReference>
<dbReference type="HAMAP" id="MF_00632">
    <property type="entry name" value="YajQ"/>
    <property type="match status" value="1"/>
</dbReference>
<dbReference type="InterPro" id="IPR007551">
    <property type="entry name" value="DUF520"/>
</dbReference>
<dbReference type="InterPro" id="IPR035571">
    <property type="entry name" value="UPF0234-like_C"/>
</dbReference>
<dbReference type="InterPro" id="IPR035570">
    <property type="entry name" value="UPF0234_N"/>
</dbReference>
<dbReference type="InterPro" id="IPR036183">
    <property type="entry name" value="YajQ-like_sf"/>
</dbReference>
<dbReference type="NCBIfam" id="NF003819">
    <property type="entry name" value="PRK05412.1"/>
    <property type="match status" value="1"/>
</dbReference>
<dbReference type="PANTHER" id="PTHR30476">
    <property type="entry name" value="UPF0234 PROTEIN YAJQ"/>
    <property type="match status" value="1"/>
</dbReference>
<dbReference type="PANTHER" id="PTHR30476:SF0">
    <property type="entry name" value="UPF0234 PROTEIN YAJQ"/>
    <property type="match status" value="1"/>
</dbReference>
<dbReference type="Pfam" id="PF04461">
    <property type="entry name" value="DUF520"/>
    <property type="match status" value="1"/>
</dbReference>
<dbReference type="SUPFAM" id="SSF89963">
    <property type="entry name" value="YajQ-like"/>
    <property type="match status" value="2"/>
</dbReference>
<accession>P0A8E8</accession>
<accession>P77482</accession>
<organism>
    <name type="scientific">Escherichia coli O6:H1 (strain CFT073 / ATCC 700928 / UPEC)</name>
    <dbReference type="NCBI Taxonomy" id="199310"/>
    <lineage>
        <taxon>Bacteria</taxon>
        <taxon>Pseudomonadati</taxon>
        <taxon>Pseudomonadota</taxon>
        <taxon>Gammaproteobacteria</taxon>
        <taxon>Enterobacterales</taxon>
        <taxon>Enterobacteriaceae</taxon>
        <taxon>Escherichia</taxon>
    </lineage>
</organism>
<keyword id="KW-0547">Nucleotide-binding</keyword>
<keyword id="KW-1185">Reference proteome</keyword>
<comment type="function">
    <text evidence="1">Nucleotide-binding protein.</text>
</comment>
<comment type="similarity">
    <text evidence="1">Belongs to the YajQ family.</text>
</comment>
<comment type="sequence caution" evidence="2">
    <conflict type="erroneous initiation">
        <sequence resource="EMBL-CDS" id="AAN79015"/>
    </conflict>
</comment>
<reference key="1">
    <citation type="journal article" date="2002" name="Proc. Natl. Acad. Sci. U.S.A.">
        <title>Extensive mosaic structure revealed by the complete genome sequence of uropathogenic Escherichia coli.</title>
        <authorList>
            <person name="Welch R.A."/>
            <person name="Burland V."/>
            <person name="Plunkett G. III"/>
            <person name="Redford P."/>
            <person name="Roesch P."/>
            <person name="Rasko D."/>
            <person name="Buckles E.L."/>
            <person name="Liou S.-R."/>
            <person name="Boutin A."/>
            <person name="Hackett J."/>
            <person name="Stroud D."/>
            <person name="Mayhew G.F."/>
            <person name="Rose D.J."/>
            <person name="Zhou S."/>
            <person name="Schwartz D.C."/>
            <person name="Perna N.T."/>
            <person name="Mobley H.L.T."/>
            <person name="Donnenberg M.S."/>
            <person name="Blattner F.R."/>
        </authorList>
    </citation>
    <scope>NUCLEOTIDE SEQUENCE [LARGE SCALE GENOMIC DNA]</scope>
    <source>
        <strain>CFT073 / ATCC 700928 / UPEC</strain>
    </source>
</reference>
<sequence>MPSFDIVSEVDLQEARNAVDNASREVESRFDFRNVEASFELNDASKTIKVLSESDFQVNQLLDILRAKLLKRGIEGSSLDVPENIVHSGKTWFVEAKLKQGIESATQKKIVKMIKDSKLKVQAQIQGDEIRVTGKSRDDLQAVMAMVRGGDLGQPFQFKNFRD</sequence>
<gene>
    <name evidence="1" type="primary">yajQ</name>
    <name type="ordered locus">c0537</name>
</gene>
<evidence type="ECO:0000255" key="1">
    <source>
        <dbReference type="HAMAP-Rule" id="MF_00632"/>
    </source>
</evidence>
<evidence type="ECO:0000305" key="2"/>
<proteinExistence type="inferred from homology"/>